<organism>
    <name type="scientific">Burkholderia orbicola (strain AU 1054)</name>
    <dbReference type="NCBI Taxonomy" id="331271"/>
    <lineage>
        <taxon>Bacteria</taxon>
        <taxon>Pseudomonadati</taxon>
        <taxon>Pseudomonadota</taxon>
        <taxon>Betaproteobacteria</taxon>
        <taxon>Burkholderiales</taxon>
        <taxon>Burkholderiaceae</taxon>
        <taxon>Burkholderia</taxon>
        <taxon>Burkholderia cepacia complex</taxon>
        <taxon>Burkholderia orbicola</taxon>
    </lineage>
</organism>
<protein>
    <recommendedName>
        <fullName evidence="1">Small ribosomal subunit protein bS21A</fullName>
    </recommendedName>
    <alternativeName>
        <fullName evidence="2">30S ribosomal protein S21 1</fullName>
    </alternativeName>
</protein>
<accession>Q1BLZ1</accession>
<reference key="1">
    <citation type="submission" date="2006-05" db="EMBL/GenBank/DDBJ databases">
        <title>Complete sequence of chromosome 2 of Burkholderia cenocepacia AU 1054.</title>
        <authorList>
            <consortium name="US DOE Joint Genome Institute"/>
            <person name="Copeland A."/>
            <person name="Lucas S."/>
            <person name="Lapidus A."/>
            <person name="Barry K."/>
            <person name="Detter J.C."/>
            <person name="Glavina del Rio T."/>
            <person name="Hammon N."/>
            <person name="Israni S."/>
            <person name="Dalin E."/>
            <person name="Tice H."/>
            <person name="Pitluck S."/>
            <person name="Chain P."/>
            <person name="Malfatti S."/>
            <person name="Shin M."/>
            <person name="Vergez L."/>
            <person name="Schmutz J."/>
            <person name="Larimer F."/>
            <person name="Land M."/>
            <person name="Hauser L."/>
            <person name="Kyrpides N."/>
            <person name="Lykidis A."/>
            <person name="LiPuma J.J."/>
            <person name="Konstantinidis K."/>
            <person name="Tiedje J.M."/>
            <person name="Richardson P."/>
        </authorList>
    </citation>
    <scope>NUCLEOTIDE SEQUENCE [LARGE SCALE GENOMIC DNA]</scope>
    <source>
        <strain>AU 1054</strain>
    </source>
</reference>
<proteinExistence type="inferred from homology"/>
<feature type="chain" id="PRO_0000266636" description="Small ribosomal subunit protein bS21A">
    <location>
        <begin position="1"/>
        <end position="70"/>
    </location>
</feature>
<comment type="similarity">
    <text evidence="1">Belongs to the bacterial ribosomal protein bS21 family.</text>
</comment>
<sequence length="70" mass="8549">MTIIRVKENEPFEVAMRRFKRTIEKNGLLTELRAREFYEKPTAERKRKKAAAVKRHYKRIRSQTLPKKLY</sequence>
<name>RS211_BURO1</name>
<dbReference type="EMBL" id="CP000379">
    <property type="protein sequence ID" value="ABF79364.1"/>
    <property type="molecule type" value="Genomic_DNA"/>
</dbReference>
<dbReference type="SMR" id="Q1BLZ1"/>
<dbReference type="HOGENOM" id="CLU_159258_1_1_4"/>
<dbReference type="GO" id="GO:1990904">
    <property type="term" value="C:ribonucleoprotein complex"/>
    <property type="evidence" value="ECO:0007669"/>
    <property type="project" value="UniProtKB-KW"/>
</dbReference>
<dbReference type="GO" id="GO:0005840">
    <property type="term" value="C:ribosome"/>
    <property type="evidence" value="ECO:0007669"/>
    <property type="project" value="UniProtKB-KW"/>
</dbReference>
<dbReference type="GO" id="GO:0003735">
    <property type="term" value="F:structural constituent of ribosome"/>
    <property type="evidence" value="ECO:0007669"/>
    <property type="project" value="InterPro"/>
</dbReference>
<dbReference type="GO" id="GO:0006412">
    <property type="term" value="P:translation"/>
    <property type="evidence" value="ECO:0007669"/>
    <property type="project" value="UniProtKB-UniRule"/>
</dbReference>
<dbReference type="Gene3D" id="1.20.5.1150">
    <property type="entry name" value="Ribosomal protein S8"/>
    <property type="match status" value="1"/>
</dbReference>
<dbReference type="HAMAP" id="MF_00358">
    <property type="entry name" value="Ribosomal_bS21"/>
    <property type="match status" value="1"/>
</dbReference>
<dbReference type="InterPro" id="IPR001911">
    <property type="entry name" value="Ribosomal_bS21"/>
</dbReference>
<dbReference type="InterPro" id="IPR038380">
    <property type="entry name" value="Ribosomal_bS21_sf"/>
</dbReference>
<dbReference type="NCBIfam" id="TIGR00030">
    <property type="entry name" value="S21p"/>
    <property type="match status" value="1"/>
</dbReference>
<dbReference type="PANTHER" id="PTHR21109">
    <property type="entry name" value="MITOCHONDRIAL 28S RIBOSOMAL PROTEIN S21"/>
    <property type="match status" value="1"/>
</dbReference>
<dbReference type="PANTHER" id="PTHR21109:SF22">
    <property type="entry name" value="SMALL RIBOSOMAL SUBUNIT PROTEIN BS21"/>
    <property type="match status" value="1"/>
</dbReference>
<dbReference type="Pfam" id="PF01165">
    <property type="entry name" value="Ribosomal_S21"/>
    <property type="match status" value="1"/>
</dbReference>
<dbReference type="PRINTS" id="PR00976">
    <property type="entry name" value="RIBOSOMALS21"/>
</dbReference>
<keyword id="KW-0687">Ribonucleoprotein</keyword>
<keyword id="KW-0689">Ribosomal protein</keyword>
<evidence type="ECO:0000255" key="1">
    <source>
        <dbReference type="HAMAP-Rule" id="MF_00358"/>
    </source>
</evidence>
<evidence type="ECO:0000305" key="2"/>
<gene>
    <name evidence="1" type="primary">rpsU1</name>
    <name type="ordered locus">Bcen_4482</name>
</gene>